<accession>Q63548</accession>
<reference key="1">
    <citation type="journal article" date="1996" name="J. Comp. Neurol.">
        <title>Anatomy of rat semaphorin III/collapsin-1 mRNA expression and relationship to developing nerve tracts during neuroembryogenesis.</title>
        <authorList>
            <person name="Giger R.J."/>
            <person name="Wolfer D.P."/>
            <person name="De Wit G.M.J."/>
            <person name="Verhaagen J."/>
        </authorList>
    </citation>
    <scope>NUCLEOTIDE SEQUENCE [MRNA]</scope>
    <source>
        <strain>Wistar</strain>
        <tissue>Brain</tissue>
    </source>
</reference>
<reference key="2">
    <citation type="journal article" date="2017" name="Front. Neurol.">
        <title>Expression of Semaphorins, Neuropilins, VEGF, and Tenascins in Rat and Human Primary Sensory Neurons after a Dorsal Root Injury.</title>
        <authorList>
            <person name="Lindholm T."/>
            <person name="Risling M."/>
            <person name="Carlstedt T."/>
            <person name="Hammarberg H."/>
            <person name="Wallquist W."/>
            <person name="Cullheim S."/>
            <person name="Skoeld M.K."/>
        </authorList>
    </citation>
    <scope>TISSUE SPECIFICITY</scope>
    <scope>INDUCTION BY INJURY</scope>
</reference>
<proteinExistence type="evidence at transcript level"/>
<keyword id="KW-0217">Developmental protein</keyword>
<keyword id="KW-0221">Differentiation</keyword>
<keyword id="KW-1015">Disulfide bond</keyword>
<keyword id="KW-0325">Glycoprotein</keyword>
<keyword id="KW-0393">Immunoglobulin domain</keyword>
<keyword id="KW-0524">Neurogenesis</keyword>
<keyword id="KW-1185">Reference proteome</keyword>
<keyword id="KW-0964">Secreted</keyword>
<keyword id="KW-0732">Signal</keyword>
<dbReference type="EMBL" id="X95286">
    <property type="protein sequence ID" value="CAA64607.1"/>
    <property type="molecule type" value="mRNA"/>
</dbReference>
<dbReference type="RefSeq" id="NP_059006.1">
    <property type="nucleotide sequence ID" value="NM_017310.2"/>
</dbReference>
<dbReference type="RefSeq" id="XP_006236051.1">
    <property type="nucleotide sequence ID" value="XM_006235989.3"/>
</dbReference>
<dbReference type="RefSeq" id="XP_006236052.1">
    <property type="nucleotide sequence ID" value="XM_006235990.5"/>
</dbReference>
<dbReference type="RefSeq" id="XP_008760924.1">
    <property type="nucleotide sequence ID" value="XM_008762702.3"/>
</dbReference>
<dbReference type="RefSeq" id="XP_017448057.1">
    <property type="nucleotide sequence ID" value="XM_017592568.1"/>
</dbReference>
<dbReference type="RefSeq" id="XP_063141933.1">
    <property type="nucleotide sequence ID" value="XM_063285863.1"/>
</dbReference>
<dbReference type="SMR" id="Q63548"/>
<dbReference type="FunCoup" id="Q63548">
    <property type="interactions" value="896"/>
</dbReference>
<dbReference type="IntAct" id="Q63548">
    <property type="interactions" value="1"/>
</dbReference>
<dbReference type="MINT" id="Q63548"/>
<dbReference type="STRING" id="10116.ENSRNOP00000036472"/>
<dbReference type="GlyCosmos" id="Q63548">
    <property type="glycosylation" value="3 sites, No reported glycans"/>
</dbReference>
<dbReference type="GlyGen" id="Q63548">
    <property type="glycosylation" value="3 sites"/>
</dbReference>
<dbReference type="iPTMnet" id="Q63548"/>
<dbReference type="PhosphoSitePlus" id="Q63548"/>
<dbReference type="PaxDb" id="10116-ENSRNOP00000036472"/>
<dbReference type="DNASU" id="29751"/>
<dbReference type="Ensembl" id="ENSRNOT00000096965.1">
    <property type="protein sequence ID" value="ENSRNOP00000085581.1"/>
    <property type="gene ID" value="ENSRNOG00000023337.3"/>
</dbReference>
<dbReference type="GeneID" id="29751"/>
<dbReference type="KEGG" id="rno:29751"/>
<dbReference type="AGR" id="RGD:3657"/>
<dbReference type="CTD" id="10371"/>
<dbReference type="RGD" id="3657">
    <property type="gene designation" value="Sema3a"/>
</dbReference>
<dbReference type="eggNOG" id="KOG3611">
    <property type="taxonomic scope" value="Eukaryota"/>
</dbReference>
<dbReference type="GeneTree" id="ENSGT00940000158203"/>
<dbReference type="HOGENOM" id="CLU_009051_5_0_1"/>
<dbReference type="InParanoid" id="Q63548"/>
<dbReference type="OMA" id="YEQPCCA"/>
<dbReference type="OrthoDB" id="9988752at2759"/>
<dbReference type="PhylomeDB" id="Q63548"/>
<dbReference type="TreeFam" id="TF316102"/>
<dbReference type="Reactome" id="R-RNO-399954">
    <property type="pathway name" value="Sema3A PAK dependent Axon repulsion"/>
</dbReference>
<dbReference type="Reactome" id="R-RNO-399955">
    <property type="pathway name" value="SEMA3A-Plexin repulsion signaling by inhibiting Integrin adhesion"/>
</dbReference>
<dbReference type="Reactome" id="R-RNO-399956">
    <property type="pathway name" value="CRMPs in Sema3A signaling"/>
</dbReference>
<dbReference type="PRO" id="PR:Q63548"/>
<dbReference type="Proteomes" id="UP000002494">
    <property type="component" value="Chromosome 4"/>
</dbReference>
<dbReference type="Bgee" id="ENSRNOG00000023337">
    <property type="expression patterns" value="Expressed in cerebellum and 17 other cell types or tissues"/>
</dbReference>
<dbReference type="GO" id="GO:0030424">
    <property type="term" value="C:axon"/>
    <property type="evidence" value="ECO:0000314"/>
    <property type="project" value="RGD"/>
</dbReference>
<dbReference type="GO" id="GO:0150053">
    <property type="term" value="C:cerebellar climbing fiber to Purkinje cell synapse"/>
    <property type="evidence" value="ECO:0000266"/>
    <property type="project" value="RGD"/>
</dbReference>
<dbReference type="GO" id="GO:0030425">
    <property type="term" value="C:dendrite"/>
    <property type="evidence" value="ECO:0000314"/>
    <property type="project" value="RGD"/>
</dbReference>
<dbReference type="GO" id="GO:0005615">
    <property type="term" value="C:extracellular space"/>
    <property type="evidence" value="ECO:0000318"/>
    <property type="project" value="GO_Central"/>
</dbReference>
<dbReference type="GO" id="GO:0098978">
    <property type="term" value="C:glutamatergic synapse"/>
    <property type="evidence" value="ECO:0000266"/>
    <property type="project" value="RGD"/>
</dbReference>
<dbReference type="GO" id="GO:0005886">
    <property type="term" value="C:plasma membrane"/>
    <property type="evidence" value="ECO:0000318"/>
    <property type="project" value="GO_Central"/>
</dbReference>
<dbReference type="GO" id="GO:0045499">
    <property type="term" value="F:chemorepellent activity"/>
    <property type="evidence" value="ECO:0000266"/>
    <property type="project" value="RGD"/>
</dbReference>
<dbReference type="GO" id="GO:0038191">
    <property type="term" value="F:neuropilin binding"/>
    <property type="evidence" value="ECO:0000266"/>
    <property type="project" value="RGD"/>
</dbReference>
<dbReference type="GO" id="GO:0030215">
    <property type="term" value="F:semaphorin receptor binding"/>
    <property type="evidence" value="ECO:0000266"/>
    <property type="project" value="RGD"/>
</dbReference>
<dbReference type="GO" id="GO:0048675">
    <property type="term" value="P:axon extension"/>
    <property type="evidence" value="ECO:0000266"/>
    <property type="project" value="RGD"/>
</dbReference>
<dbReference type="GO" id="GO:0048846">
    <property type="term" value="P:axon extension involved in axon guidance"/>
    <property type="evidence" value="ECO:0000266"/>
    <property type="project" value="RGD"/>
</dbReference>
<dbReference type="GO" id="GO:0007411">
    <property type="term" value="P:axon guidance"/>
    <property type="evidence" value="ECO:0000316"/>
    <property type="project" value="MGI"/>
</dbReference>
<dbReference type="GO" id="GO:0007413">
    <property type="term" value="P:axonal fasciculation"/>
    <property type="evidence" value="ECO:0000266"/>
    <property type="project" value="RGD"/>
</dbReference>
<dbReference type="GO" id="GO:0060385">
    <property type="term" value="P:axonogenesis involved in innervation"/>
    <property type="evidence" value="ECO:0000266"/>
    <property type="project" value="RGD"/>
</dbReference>
<dbReference type="GO" id="GO:0150020">
    <property type="term" value="P:basal dendrite arborization"/>
    <property type="evidence" value="ECO:0000266"/>
    <property type="project" value="RGD"/>
</dbReference>
<dbReference type="GO" id="GO:0021785">
    <property type="term" value="P:branchiomotor neuron axon guidance"/>
    <property type="evidence" value="ECO:0000266"/>
    <property type="project" value="RGD"/>
</dbReference>
<dbReference type="GO" id="GO:0048813">
    <property type="term" value="P:dendrite morphogenesis"/>
    <property type="evidence" value="ECO:0000266"/>
    <property type="project" value="RGD"/>
</dbReference>
<dbReference type="GO" id="GO:0060666">
    <property type="term" value="P:dichotomous subdivision of terminal units involved in salivary gland branching"/>
    <property type="evidence" value="ECO:0000266"/>
    <property type="project" value="RGD"/>
</dbReference>
<dbReference type="GO" id="GO:0010631">
    <property type="term" value="P:epithelial cell migration"/>
    <property type="evidence" value="ECO:0000266"/>
    <property type="project" value="RGD"/>
</dbReference>
<dbReference type="GO" id="GO:0021612">
    <property type="term" value="P:facial nerve structural organization"/>
    <property type="evidence" value="ECO:0000266"/>
    <property type="project" value="RGD"/>
</dbReference>
<dbReference type="GO" id="GO:1903375">
    <property type="term" value="P:facioacoustic ganglion development"/>
    <property type="evidence" value="ECO:0000266"/>
    <property type="project" value="RGD"/>
</dbReference>
<dbReference type="GO" id="GO:0021828">
    <property type="term" value="P:gonadotrophin-releasing hormone neuronal migration to the hypothalamus"/>
    <property type="evidence" value="ECO:0000266"/>
    <property type="project" value="RGD"/>
</dbReference>
<dbReference type="GO" id="GO:0099558">
    <property type="term" value="P:maintenance of synapse structure"/>
    <property type="evidence" value="ECO:0000266"/>
    <property type="project" value="RGD"/>
</dbReference>
<dbReference type="GO" id="GO:0008045">
    <property type="term" value="P:motor neuron axon guidance"/>
    <property type="evidence" value="ECO:0000266"/>
    <property type="project" value="RGD"/>
</dbReference>
<dbReference type="GO" id="GO:0050919">
    <property type="term" value="P:negative chemotaxis"/>
    <property type="evidence" value="ECO:0000266"/>
    <property type="project" value="RGD"/>
</dbReference>
<dbReference type="GO" id="GO:0030517">
    <property type="term" value="P:negative regulation of axon extension"/>
    <property type="evidence" value="ECO:0000314"/>
    <property type="project" value="RGD"/>
</dbReference>
<dbReference type="GO" id="GO:0048843">
    <property type="term" value="P:negative regulation of axon extension involved in axon guidance"/>
    <property type="evidence" value="ECO:0000266"/>
    <property type="project" value="RGD"/>
</dbReference>
<dbReference type="GO" id="GO:0010633">
    <property type="term" value="P:negative regulation of epithelial cell migration"/>
    <property type="evidence" value="ECO:0000266"/>
    <property type="project" value="RGD"/>
</dbReference>
<dbReference type="GO" id="GO:0010977">
    <property type="term" value="P:negative regulation of neuron projection development"/>
    <property type="evidence" value="ECO:0000266"/>
    <property type="project" value="RGD"/>
</dbReference>
<dbReference type="GO" id="GO:0021675">
    <property type="term" value="P:nerve development"/>
    <property type="evidence" value="ECO:0000266"/>
    <property type="project" value="RGD"/>
</dbReference>
<dbReference type="GO" id="GO:0007399">
    <property type="term" value="P:nervous system development"/>
    <property type="evidence" value="ECO:0000266"/>
    <property type="project" value="RGD"/>
</dbReference>
<dbReference type="GO" id="GO:0001755">
    <property type="term" value="P:neural crest cell migration"/>
    <property type="evidence" value="ECO:0000318"/>
    <property type="project" value="GO_Central"/>
</dbReference>
<dbReference type="GO" id="GO:1901166">
    <property type="term" value="P:neural crest cell migration involved in autonomic nervous system development"/>
    <property type="evidence" value="ECO:0000266"/>
    <property type="project" value="RGD"/>
</dbReference>
<dbReference type="GO" id="GO:1903045">
    <property type="term" value="P:neural crest cell migration involved in sympathetic nervous system development"/>
    <property type="evidence" value="ECO:0000266"/>
    <property type="project" value="RGD"/>
</dbReference>
<dbReference type="GO" id="GO:0001764">
    <property type="term" value="P:neuron migration"/>
    <property type="evidence" value="ECO:0000266"/>
    <property type="project" value="RGD"/>
</dbReference>
<dbReference type="GO" id="GO:0021772">
    <property type="term" value="P:olfactory bulb development"/>
    <property type="evidence" value="ECO:0000250"/>
    <property type="project" value="UniProtKB"/>
</dbReference>
<dbReference type="GO" id="GO:0030335">
    <property type="term" value="P:positive regulation of cell migration"/>
    <property type="evidence" value="ECO:0000318"/>
    <property type="project" value="GO_Central"/>
</dbReference>
<dbReference type="GO" id="GO:2000020">
    <property type="term" value="P:positive regulation of male gonad development"/>
    <property type="evidence" value="ECO:0000266"/>
    <property type="project" value="RGD"/>
</dbReference>
<dbReference type="GO" id="GO:2001224">
    <property type="term" value="P:positive regulation of neuron migration"/>
    <property type="evidence" value="ECO:0000266"/>
    <property type="project" value="RGD"/>
</dbReference>
<dbReference type="GO" id="GO:0048841">
    <property type="term" value="P:regulation of axon extension involved in axon guidance"/>
    <property type="evidence" value="ECO:0000266"/>
    <property type="project" value="RGD"/>
</dbReference>
<dbReference type="GO" id="GO:0002027">
    <property type="term" value="P:regulation of heart rate"/>
    <property type="evidence" value="ECO:0000266"/>
    <property type="project" value="RGD"/>
</dbReference>
<dbReference type="GO" id="GO:0071526">
    <property type="term" value="P:semaphorin-plexin signaling pathway"/>
    <property type="evidence" value="ECO:0000266"/>
    <property type="project" value="RGD"/>
</dbReference>
<dbReference type="GO" id="GO:0061549">
    <property type="term" value="P:sympathetic ganglion development"/>
    <property type="evidence" value="ECO:0000266"/>
    <property type="project" value="RGD"/>
</dbReference>
<dbReference type="GO" id="GO:0097490">
    <property type="term" value="P:sympathetic neuron projection extension"/>
    <property type="evidence" value="ECO:0000266"/>
    <property type="project" value="RGD"/>
</dbReference>
<dbReference type="GO" id="GO:0097491">
    <property type="term" value="P:sympathetic neuron projection guidance"/>
    <property type="evidence" value="ECO:0000266"/>
    <property type="project" value="RGD"/>
</dbReference>
<dbReference type="GO" id="GO:0008039">
    <property type="term" value="P:synaptic target recognition"/>
    <property type="evidence" value="ECO:0000266"/>
    <property type="project" value="RGD"/>
</dbReference>
<dbReference type="GO" id="GO:0061551">
    <property type="term" value="P:trigeminal ganglion development"/>
    <property type="evidence" value="ECO:0000266"/>
    <property type="project" value="RGD"/>
</dbReference>
<dbReference type="GO" id="GO:0021637">
    <property type="term" value="P:trigeminal nerve structural organization"/>
    <property type="evidence" value="ECO:0000266"/>
    <property type="project" value="RGD"/>
</dbReference>
<dbReference type="GO" id="GO:0036486">
    <property type="term" value="P:ventral trunk neural crest cell migration"/>
    <property type="evidence" value="ECO:0000266"/>
    <property type="project" value="RGD"/>
</dbReference>
<dbReference type="CDD" id="cd05871">
    <property type="entry name" value="Ig_Sema3"/>
    <property type="match status" value="1"/>
</dbReference>
<dbReference type="CDD" id="cd11249">
    <property type="entry name" value="Sema_3A"/>
    <property type="match status" value="1"/>
</dbReference>
<dbReference type="FunFam" id="2.130.10.10:FF:000015">
    <property type="entry name" value="Semaphorin 3B"/>
    <property type="match status" value="1"/>
</dbReference>
<dbReference type="FunFam" id="2.60.40.10:FF:000030">
    <property type="entry name" value="Semaphorin 3F like"/>
    <property type="match status" value="1"/>
</dbReference>
<dbReference type="FunFam" id="3.30.1680.10:FF:000001">
    <property type="entry name" value="Semaphorin 3F like"/>
    <property type="match status" value="1"/>
</dbReference>
<dbReference type="Gene3D" id="2.60.40.10">
    <property type="entry name" value="Immunoglobulins"/>
    <property type="match status" value="1"/>
</dbReference>
<dbReference type="Gene3D" id="3.30.1680.10">
    <property type="entry name" value="ligand-binding face of the semaphorins, domain 2"/>
    <property type="match status" value="1"/>
</dbReference>
<dbReference type="Gene3D" id="2.130.10.10">
    <property type="entry name" value="YVTN repeat-like/Quinoprotein amine dehydrogenase"/>
    <property type="match status" value="1"/>
</dbReference>
<dbReference type="InterPro" id="IPR007110">
    <property type="entry name" value="Ig-like_dom"/>
</dbReference>
<dbReference type="InterPro" id="IPR036179">
    <property type="entry name" value="Ig-like_dom_sf"/>
</dbReference>
<dbReference type="InterPro" id="IPR013783">
    <property type="entry name" value="Ig-like_fold"/>
</dbReference>
<dbReference type="InterPro" id="IPR003599">
    <property type="entry name" value="Ig_sub"/>
</dbReference>
<dbReference type="InterPro" id="IPR041416">
    <property type="entry name" value="IL-1RAcP-like_ig"/>
</dbReference>
<dbReference type="InterPro" id="IPR016201">
    <property type="entry name" value="PSI"/>
</dbReference>
<dbReference type="InterPro" id="IPR042820">
    <property type="entry name" value="Sema3A_sema"/>
</dbReference>
<dbReference type="InterPro" id="IPR001627">
    <property type="entry name" value="Semap_dom"/>
</dbReference>
<dbReference type="InterPro" id="IPR036352">
    <property type="entry name" value="Semap_dom_sf"/>
</dbReference>
<dbReference type="InterPro" id="IPR027231">
    <property type="entry name" value="Semaphorin"/>
</dbReference>
<dbReference type="InterPro" id="IPR015943">
    <property type="entry name" value="WD40/YVTN_repeat-like_dom_sf"/>
</dbReference>
<dbReference type="PANTHER" id="PTHR11036">
    <property type="entry name" value="SEMAPHORIN"/>
    <property type="match status" value="1"/>
</dbReference>
<dbReference type="PANTHER" id="PTHR11036:SF23">
    <property type="entry name" value="SEMAPHORIN-3A"/>
    <property type="match status" value="1"/>
</dbReference>
<dbReference type="Pfam" id="PF18452">
    <property type="entry name" value="Ig_6"/>
    <property type="match status" value="1"/>
</dbReference>
<dbReference type="Pfam" id="PF01403">
    <property type="entry name" value="Sema"/>
    <property type="match status" value="1"/>
</dbReference>
<dbReference type="SMART" id="SM00409">
    <property type="entry name" value="IG"/>
    <property type="match status" value="1"/>
</dbReference>
<dbReference type="SMART" id="SM00423">
    <property type="entry name" value="PSI"/>
    <property type="match status" value="1"/>
</dbReference>
<dbReference type="SMART" id="SM00630">
    <property type="entry name" value="Sema"/>
    <property type="match status" value="1"/>
</dbReference>
<dbReference type="SUPFAM" id="SSF48726">
    <property type="entry name" value="Immunoglobulin"/>
    <property type="match status" value="1"/>
</dbReference>
<dbReference type="SUPFAM" id="SSF103575">
    <property type="entry name" value="Plexin repeat"/>
    <property type="match status" value="1"/>
</dbReference>
<dbReference type="SUPFAM" id="SSF101912">
    <property type="entry name" value="Sema domain"/>
    <property type="match status" value="1"/>
</dbReference>
<dbReference type="PROSITE" id="PS50835">
    <property type="entry name" value="IG_LIKE"/>
    <property type="match status" value="1"/>
</dbReference>
<dbReference type="PROSITE" id="PS51004">
    <property type="entry name" value="SEMA"/>
    <property type="match status" value="1"/>
</dbReference>
<evidence type="ECO:0000250" key="1"/>
<evidence type="ECO:0000255" key="2"/>
<evidence type="ECO:0000255" key="3">
    <source>
        <dbReference type="PROSITE-ProRule" id="PRU00352"/>
    </source>
</evidence>
<evidence type="ECO:0000256" key="4">
    <source>
        <dbReference type="SAM" id="MobiDB-lite"/>
    </source>
</evidence>
<evidence type="ECO:0000269" key="5">
    <source>
    </source>
</evidence>
<evidence type="ECO:0000305" key="6"/>
<feature type="signal peptide" evidence="2">
    <location>
        <begin position="1"/>
        <end position="20"/>
    </location>
</feature>
<feature type="chain" id="PRO_0000032305" description="Semaphorin-3A">
    <location>
        <begin position="21"/>
        <end position="772"/>
    </location>
</feature>
<feature type="domain" description="Sema" evidence="3">
    <location>
        <begin position="31"/>
        <end position="514"/>
    </location>
</feature>
<feature type="domain" description="Ig-like C2-type">
    <location>
        <begin position="577"/>
        <end position="665"/>
    </location>
</feature>
<feature type="region of interest" description="Disordered" evidence="4">
    <location>
        <begin position="677"/>
        <end position="698"/>
    </location>
</feature>
<feature type="region of interest" description="Disordered" evidence="4">
    <location>
        <begin position="729"/>
        <end position="772"/>
    </location>
</feature>
<feature type="compositionally biased region" description="Basic and acidic residues" evidence="4">
    <location>
        <begin position="677"/>
        <end position="691"/>
    </location>
</feature>
<feature type="compositionally biased region" description="Basic residues" evidence="4">
    <location>
        <begin position="729"/>
        <end position="738"/>
    </location>
</feature>
<feature type="compositionally biased region" description="Basic and acidic residues" evidence="4">
    <location>
        <begin position="750"/>
        <end position="772"/>
    </location>
</feature>
<feature type="glycosylation site" description="N-linked (GlcNAc...) asparagine" evidence="2">
    <location>
        <position position="53"/>
    </location>
</feature>
<feature type="glycosylation site" description="N-linked (GlcNAc...) asparagine" evidence="2">
    <location>
        <position position="125"/>
    </location>
</feature>
<feature type="glycosylation site" description="N-linked (GlcNAc...) asparagine" evidence="2">
    <location>
        <position position="591"/>
    </location>
</feature>
<feature type="disulfide bond" evidence="1">
    <location>
        <begin position="103"/>
        <end position="114"/>
    </location>
</feature>
<feature type="disulfide bond" evidence="1">
    <location>
        <begin position="132"/>
        <end position="141"/>
    </location>
</feature>
<feature type="disulfide bond" evidence="1">
    <location>
        <begin position="269"/>
        <end position="381"/>
    </location>
</feature>
<feature type="disulfide bond" evidence="1">
    <location>
        <begin position="293"/>
        <end position="341"/>
    </location>
</feature>
<feature type="disulfide bond" evidence="1">
    <location>
        <begin position="517"/>
        <end position="535"/>
    </location>
</feature>
<feature type="disulfide bond" evidence="1">
    <location>
        <begin position="650"/>
        <end position="723"/>
    </location>
</feature>
<name>SEM3A_RAT</name>
<organism>
    <name type="scientific">Rattus norvegicus</name>
    <name type="common">Rat</name>
    <dbReference type="NCBI Taxonomy" id="10116"/>
    <lineage>
        <taxon>Eukaryota</taxon>
        <taxon>Metazoa</taxon>
        <taxon>Chordata</taxon>
        <taxon>Craniata</taxon>
        <taxon>Vertebrata</taxon>
        <taxon>Euteleostomi</taxon>
        <taxon>Mammalia</taxon>
        <taxon>Eutheria</taxon>
        <taxon>Euarchontoglires</taxon>
        <taxon>Glires</taxon>
        <taxon>Rodentia</taxon>
        <taxon>Myomorpha</taxon>
        <taxon>Muroidea</taxon>
        <taxon>Muridae</taxon>
        <taxon>Murinae</taxon>
        <taxon>Rattus</taxon>
    </lineage>
</organism>
<sequence>MGWFTGIACLFWGILLTARANYANGKNNVPRLKLSYKEMLESNNVITFNGLANSSSYHTFLLDEERSRLYVGAKDHIFSFNLVNIKDFQKIVWPVSYTRRDECKWAGKDILKECANFIKVLKAYNQTHLYACGTGAFHPICTYIEVGHHPEDNIFKLQDSHFENGRGKSPYDPKLLTASLLIDGELYSGTAADFMGRDFAIFRTLGHHHPIRTEQHDSRWLNDPRFISAHLIPESDNPEDDKVYFFFRENAIDGEHSGKATHARIGQICKNDFGGHRSLVNKWTTFLKARLICSVPGPNGIDTHFDELQDVFLMNSKDPKNPIVYGVFTTSSNIFKGSAVCMYSMSDVRRVFLGPYAHRDGPNYQWVPYQGRVPYPRPGTCPSKTFGGFDSTKDLPDDVITFARSHPAMYNPVFPINNRPIMIKTDVNYQFTQIVVDRVDAEDGQYDVMFIGTDVGTVLKVVSVPKETWHDLEEVLLEEMTVFREPTTISAMELSTKQQQLYIGSTAGVAQLPLHRCDIYGKACAECCLARDPYCAWDGSSCSRYFPTAKRRTRRQDIRNGDPLTHCSDLQHHDNHHGHSLEERIIYGVENSSTFLECSPKSQRALVYWQFQRRNEDRKEEIRVGDHIIRTEQGLLLRSLQKKDSGNYLCHAVEHGFMQTLLKVTLEVIDTEHLEELLHKDDDGDGSKTKEMSSSMTPSQKVWYRDFMQLINHPNLNTMDEFCEQVWKRDRKQRRQRPGHSQGSSNKWKHMQESKKGRNRRTHEFERAPRSV</sequence>
<gene>
    <name type="primary">Sema3a</name>
</gene>
<protein>
    <recommendedName>
        <fullName>Semaphorin-3A</fullName>
    </recommendedName>
    <alternativeName>
        <fullName>Semaphorin III</fullName>
        <shortName>Sema III</shortName>
    </alternativeName>
</protein>
<comment type="function">
    <text evidence="1">May be involved in guiding growing axons towards their targets by forming a molecular boundary that instructs axons to engage in the formation of specific nerve tracts. Binds to neuropilin. Involved in the development of the olfactory system and in neuronal control of puberty (By similarity).</text>
</comment>
<comment type="subunit">
    <text evidence="1">Interacts with PLXND1.</text>
</comment>
<comment type="subcellular location">
    <subcellularLocation>
        <location evidence="1">Secreted</location>
    </subcellularLocation>
</comment>
<comment type="tissue specificity">
    <text evidence="5">Expressed in the dorsal root ganglia.</text>
</comment>
<comment type="developmental stage">
    <text>At 11 dpc, expression was restricted to the olfactory pit, the basal and rostral surface of the telencephalic vesicle, the eye anlage, the epithelium of Rathke pouch, and somites. At later developmental stages, it was widely distributed in neuronal as well as in mesenchymal and epithelial structures outside the nervous system. After birth, mesenchymal levels decreased rapidly and expression became restricted to specific sets of neurons in the CNS. In the mature CNS, it is detectable in mitral cells, neurons of the accessory bulb and cerebral cortex, cerebellar Purkinje cells, as well as a subset of cranial and spinal motoneurons.</text>
</comment>
<comment type="induction">
    <text evidence="5">General decrease in dorsal root ganglia in response to injury from dorsal rhizotomy, with the greatest decrease evident 21 days post-injury, returning to comparable levels 1 year post-injury (PubMed:28270793). Decreased in dorsal root ganglia in response to sciatic nerve transection 3 days post-injury, returning to comparable levels 14 days post-injury (PubMed:28270793).</text>
</comment>
<comment type="domain">
    <text>Strong binding to neuropilin is mediated by the carboxy third of the protein.</text>
</comment>
<comment type="similarity">
    <text evidence="6">Belongs to the semaphorin family.</text>
</comment>